<gene>
    <name type="primary">PHB2</name>
    <name type="ORF">RCJMB04_1i23</name>
</gene>
<accession>Q5ZMN3</accession>
<comment type="function">
    <text evidence="3">Protein with pleiotropic attributes mediated in a cell-compartment- and tissue-specific manner, which include the plasma membrane-associated cell signaling functions, mitochondrial chaperone, and transcriptional co-regulator of transcription factors and sex steroid hormones in the nucleus.</text>
</comment>
<comment type="function">
    <text evidence="3">In the mitochondria, together with PHB, forms large ring complexes (prohibitin complexes) in the inner mitochondrial membrane (IMM) and functions as a chaperone protein that stabilizes mitochondrial respiratory enzymes and maintains mitochondrial integrity in the IMM, which is required for mitochondrial morphogenesis, neuronal survival, and normal lifespan.</text>
</comment>
<comment type="function">
    <text evidence="3">In the nucleus, serves as transcriptional co-regulator.</text>
</comment>
<comment type="subunit">
    <text evidence="3">The mitochondrial prohibitin complex consists of two subunits (PHB1 and PHB2), assembled into a membrane-associated ring-shaped supercomplex of approximately 1 mDa.</text>
</comment>
<comment type="subcellular location">
    <subcellularLocation>
        <location evidence="2">Mitochondrion inner membrane</location>
    </subcellularLocation>
    <subcellularLocation>
        <location evidence="2">Cytoplasm</location>
    </subcellularLocation>
    <subcellularLocation>
        <location evidence="2">Nucleus</location>
    </subcellularLocation>
    <subcellularLocation>
        <location evidence="3">Cell membrane</location>
    </subcellularLocation>
</comment>
<comment type="similarity">
    <text evidence="5">Belongs to the prohibitin family.</text>
</comment>
<dbReference type="EMBL" id="AJ719351">
    <property type="protein sequence ID" value="CAG31010.1"/>
    <property type="molecule type" value="mRNA"/>
</dbReference>
<dbReference type="RefSeq" id="NP_001074354.1">
    <property type="nucleotide sequence ID" value="NM_001080885.2"/>
</dbReference>
<dbReference type="SMR" id="Q5ZMN3"/>
<dbReference type="BioGRID" id="691830">
    <property type="interactions" value="2"/>
</dbReference>
<dbReference type="FunCoup" id="Q5ZMN3">
    <property type="interactions" value="2660"/>
</dbReference>
<dbReference type="STRING" id="9031.ENSGALP00000023446"/>
<dbReference type="PaxDb" id="9031-ENSGALP00000023446"/>
<dbReference type="Ensembl" id="ENSGALT00000023492">
    <property type="protein sequence ID" value="ENSGALP00000023446"/>
    <property type="gene ID" value="ENSGALG00000014567"/>
</dbReference>
<dbReference type="GeneID" id="771124"/>
<dbReference type="KEGG" id="gga:771124"/>
<dbReference type="CTD" id="11331"/>
<dbReference type="VEuPathDB" id="HostDB:geneid_771124"/>
<dbReference type="eggNOG" id="KOG3090">
    <property type="taxonomic scope" value="Eukaryota"/>
</dbReference>
<dbReference type="InParanoid" id="Q5ZMN3"/>
<dbReference type="OMA" id="NEGTHFQ"/>
<dbReference type="OrthoDB" id="275637at2759"/>
<dbReference type="PhylomeDB" id="Q5ZMN3"/>
<dbReference type="PRO" id="PR:Q5ZMN3"/>
<dbReference type="Proteomes" id="UP000000539">
    <property type="component" value="Unassembled WGS sequence"/>
</dbReference>
<dbReference type="GO" id="GO:0009986">
    <property type="term" value="C:cell surface"/>
    <property type="evidence" value="ECO:0000250"/>
    <property type="project" value="UniProtKB"/>
</dbReference>
<dbReference type="GO" id="GO:0005737">
    <property type="term" value="C:cytoplasm"/>
    <property type="evidence" value="ECO:0000250"/>
    <property type="project" value="UniProtKB"/>
</dbReference>
<dbReference type="GO" id="GO:0005743">
    <property type="term" value="C:mitochondrial inner membrane"/>
    <property type="evidence" value="ECO:0000250"/>
    <property type="project" value="UniProtKB"/>
</dbReference>
<dbReference type="GO" id="GO:0035632">
    <property type="term" value="C:mitochondrial prohibitin complex"/>
    <property type="evidence" value="ECO:0000250"/>
    <property type="project" value="UniProtKB"/>
</dbReference>
<dbReference type="GO" id="GO:0016363">
    <property type="term" value="C:nuclear matrix"/>
    <property type="evidence" value="ECO:0000250"/>
    <property type="project" value="UniProtKB"/>
</dbReference>
<dbReference type="GO" id="GO:0005634">
    <property type="term" value="C:nucleus"/>
    <property type="evidence" value="ECO:0000250"/>
    <property type="project" value="UniProtKB"/>
</dbReference>
<dbReference type="GO" id="GO:0005886">
    <property type="term" value="C:plasma membrane"/>
    <property type="evidence" value="ECO:0000250"/>
    <property type="project" value="UniProtKB"/>
</dbReference>
<dbReference type="GO" id="GO:0042803">
    <property type="term" value="F:protein homodimerization activity"/>
    <property type="evidence" value="ECO:0000250"/>
    <property type="project" value="UniProtKB"/>
</dbReference>
<dbReference type="GO" id="GO:0000423">
    <property type="term" value="P:mitophagy"/>
    <property type="evidence" value="ECO:0000250"/>
    <property type="project" value="UniProtKB"/>
</dbReference>
<dbReference type="CDD" id="cd03401">
    <property type="entry name" value="SPFH_prohibitin"/>
    <property type="match status" value="1"/>
</dbReference>
<dbReference type="FunFam" id="3.30.479.30:FF:000001">
    <property type="entry name" value="Prohibitin 2"/>
    <property type="match status" value="1"/>
</dbReference>
<dbReference type="Gene3D" id="3.30.479.30">
    <property type="entry name" value="Band 7 domain"/>
    <property type="match status" value="1"/>
</dbReference>
<dbReference type="InterPro" id="IPR001107">
    <property type="entry name" value="Band_7"/>
</dbReference>
<dbReference type="InterPro" id="IPR036013">
    <property type="entry name" value="Band_7/SPFH_dom_sf"/>
</dbReference>
<dbReference type="InterPro" id="IPR000163">
    <property type="entry name" value="Prohibitin"/>
</dbReference>
<dbReference type="PANTHER" id="PTHR23222">
    <property type="entry name" value="PROHIBITIN"/>
    <property type="match status" value="1"/>
</dbReference>
<dbReference type="PANTHER" id="PTHR23222:SF1">
    <property type="entry name" value="PROHIBITIN-2"/>
    <property type="match status" value="1"/>
</dbReference>
<dbReference type="Pfam" id="PF01145">
    <property type="entry name" value="Band_7"/>
    <property type="match status" value="1"/>
</dbReference>
<dbReference type="PRINTS" id="PR00679">
    <property type="entry name" value="PROHIBITIN"/>
</dbReference>
<dbReference type="SMART" id="SM00244">
    <property type="entry name" value="PHB"/>
    <property type="match status" value="1"/>
</dbReference>
<dbReference type="SUPFAM" id="SSF117892">
    <property type="entry name" value="Band 7/SPFH domain"/>
    <property type="match status" value="1"/>
</dbReference>
<feature type="chain" id="PRO_0000328653" description="Prohibitin-2">
    <location>
        <begin position="1"/>
        <end position="301"/>
    </location>
</feature>
<feature type="region of interest" description="Necessary for transcriptional repression" evidence="1">
    <location>
        <begin position="19"/>
        <end position="49"/>
    </location>
</feature>
<feature type="region of interest" description="Necessary for transcriptional repression" evidence="1">
    <location>
        <begin position="150"/>
        <end position="174"/>
    </location>
</feature>
<feature type="coiled-coil region" evidence="4">
    <location>
        <begin position="190"/>
        <end position="237"/>
    </location>
</feature>
<organism>
    <name type="scientific">Gallus gallus</name>
    <name type="common">Chicken</name>
    <dbReference type="NCBI Taxonomy" id="9031"/>
    <lineage>
        <taxon>Eukaryota</taxon>
        <taxon>Metazoa</taxon>
        <taxon>Chordata</taxon>
        <taxon>Craniata</taxon>
        <taxon>Vertebrata</taxon>
        <taxon>Euteleostomi</taxon>
        <taxon>Archelosauria</taxon>
        <taxon>Archosauria</taxon>
        <taxon>Dinosauria</taxon>
        <taxon>Saurischia</taxon>
        <taxon>Theropoda</taxon>
        <taxon>Coelurosauria</taxon>
        <taxon>Aves</taxon>
        <taxon>Neognathae</taxon>
        <taxon>Galloanserae</taxon>
        <taxon>Galliformes</taxon>
        <taxon>Phasianidae</taxon>
        <taxon>Phasianinae</taxon>
        <taxon>Gallus</taxon>
    </lineage>
</organism>
<sequence length="301" mass="33337">MAQSLKDLAGRLPAGPRGVGTALKLLLGAGALAYGVRESVFIVEGGQRAIFFNRIGGVQQDTILAEGLHFRIPWFQYPIIYDIRARPRKISSPTGSKDLQMVNISLRVLTRPNAAELPSMYQRLGLDYEERVLPSIVNEVLKSVVAKFNASQLITQRAQVSLLIRRELTERAKDFSLILDDVAITELSFSREYTAAVEAKQVAQQEAQRAQFLVEKAKQEQKQKIVQAEGEATAAKMLGEALSRNPGYIKLRKIRAAQNISKTIAGSQNRVYLTADNLVLNLQDEGFTRGSDSLLLKQGKK</sequence>
<name>PHB2_CHICK</name>
<proteinExistence type="evidence at transcript level"/>
<protein>
    <recommendedName>
        <fullName>Prohibitin-2</fullName>
    </recommendedName>
</protein>
<keyword id="KW-1003">Cell membrane</keyword>
<keyword id="KW-0175">Coiled coil</keyword>
<keyword id="KW-0963">Cytoplasm</keyword>
<keyword id="KW-0472">Membrane</keyword>
<keyword id="KW-0496">Mitochondrion</keyword>
<keyword id="KW-0999">Mitochondrion inner membrane</keyword>
<keyword id="KW-0539">Nucleus</keyword>
<keyword id="KW-0675">Receptor</keyword>
<keyword id="KW-1185">Reference proteome</keyword>
<keyword id="KW-0678">Repressor</keyword>
<keyword id="KW-0804">Transcription</keyword>
<keyword id="KW-0805">Transcription regulation</keyword>
<evidence type="ECO:0000250" key="1"/>
<evidence type="ECO:0000250" key="2">
    <source>
        <dbReference type="UniProtKB" id="O35129"/>
    </source>
</evidence>
<evidence type="ECO:0000250" key="3">
    <source>
        <dbReference type="UniProtKB" id="Q99623"/>
    </source>
</evidence>
<evidence type="ECO:0000255" key="4"/>
<evidence type="ECO:0000305" key="5"/>
<reference key="1">
    <citation type="journal article" date="2005" name="Genome Biol.">
        <title>Full-length cDNAs from chicken bursal lymphocytes to facilitate gene function analysis.</title>
        <authorList>
            <person name="Caldwell R.B."/>
            <person name="Kierzek A.M."/>
            <person name="Arakawa H."/>
            <person name="Bezzubov Y."/>
            <person name="Zaim J."/>
            <person name="Fiedler P."/>
            <person name="Kutter S."/>
            <person name="Blagodatski A."/>
            <person name="Kostovska D."/>
            <person name="Koter M."/>
            <person name="Plachy J."/>
            <person name="Carninci P."/>
            <person name="Hayashizaki Y."/>
            <person name="Buerstedde J.-M."/>
        </authorList>
    </citation>
    <scope>NUCLEOTIDE SEQUENCE [LARGE SCALE MRNA]</scope>
    <source>
        <strain>CB</strain>
        <tissue>Bursa of Fabricius</tissue>
    </source>
</reference>